<protein>
    <recommendedName>
        <fullName evidence="1">Small ribosomal subunit protein uS14</fullName>
    </recommendedName>
    <alternativeName>
        <fullName evidence="2">30S ribosomal protein S14 type Z</fullName>
    </alternativeName>
</protein>
<name>RS14Z_CAMJR</name>
<dbReference type="EMBL" id="CP000025">
    <property type="protein sequence ID" value="AAW36284.1"/>
    <property type="molecule type" value="Genomic_DNA"/>
</dbReference>
<dbReference type="RefSeq" id="WP_002851478.1">
    <property type="nucleotide sequence ID" value="NC_003912.7"/>
</dbReference>
<dbReference type="SMR" id="Q5HSA3"/>
<dbReference type="KEGG" id="cjr:CJE1862"/>
<dbReference type="HOGENOM" id="CLU_139869_3_0_7"/>
<dbReference type="GO" id="GO:0005737">
    <property type="term" value="C:cytoplasm"/>
    <property type="evidence" value="ECO:0007669"/>
    <property type="project" value="UniProtKB-ARBA"/>
</dbReference>
<dbReference type="GO" id="GO:0015935">
    <property type="term" value="C:small ribosomal subunit"/>
    <property type="evidence" value="ECO:0007669"/>
    <property type="project" value="TreeGrafter"/>
</dbReference>
<dbReference type="GO" id="GO:0019843">
    <property type="term" value="F:rRNA binding"/>
    <property type="evidence" value="ECO:0007669"/>
    <property type="project" value="UniProtKB-UniRule"/>
</dbReference>
<dbReference type="GO" id="GO:0003735">
    <property type="term" value="F:structural constituent of ribosome"/>
    <property type="evidence" value="ECO:0007669"/>
    <property type="project" value="InterPro"/>
</dbReference>
<dbReference type="GO" id="GO:0008270">
    <property type="term" value="F:zinc ion binding"/>
    <property type="evidence" value="ECO:0007669"/>
    <property type="project" value="UniProtKB-UniRule"/>
</dbReference>
<dbReference type="GO" id="GO:0006412">
    <property type="term" value="P:translation"/>
    <property type="evidence" value="ECO:0007669"/>
    <property type="project" value="UniProtKB-UniRule"/>
</dbReference>
<dbReference type="FunFam" id="4.10.830.10:FF:000001">
    <property type="entry name" value="30S ribosomal protein S14 type Z"/>
    <property type="match status" value="1"/>
</dbReference>
<dbReference type="Gene3D" id="4.10.830.10">
    <property type="entry name" value="30s Ribosomal Protein S14, Chain N"/>
    <property type="match status" value="1"/>
</dbReference>
<dbReference type="HAMAP" id="MF_01364_B">
    <property type="entry name" value="Ribosomal_uS14_2_B"/>
    <property type="match status" value="1"/>
</dbReference>
<dbReference type="InterPro" id="IPR001209">
    <property type="entry name" value="Ribosomal_uS14"/>
</dbReference>
<dbReference type="InterPro" id="IPR023053">
    <property type="entry name" value="Ribosomal_uS14_bact"/>
</dbReference>
<dbReference type="InterPro" id="IPR018271">
    <property type="entry name" value="Ribosomal_uS14_CS"/>
</dbReference>
<dbReference type="InterPro" id="IPR043140">
    <property type="entry name" value="Ribosomal_uS14_sf"/>
</dbReference>
<dbReference type="NCBIfam" id="NF005974">
    <property type="entry name" value="PRK08061.1"/>
    <property type="match status" value="1"/>
</dbReference>
<dbReference type="PANTHER" id="PTHR19836">
    <property type="entry name" value="30S RIBOSOMAL PROTEIN S14"/>
    <property type="match status" value="1"/>
</dbReference>
<dbReference type="PANTHER" id="PTHR19836:SF19">
    <property type="entry name" value="SMALL RIBOSOMAL SUBUNIT PROTEIN US14M"/>
    <property type="match status" value="1"/>
</dbReference>
<dbReference type="Pfam" id="PF00253">
    <property type="entry name" value="Ribosomal_S14"/>
    <property type="match status" value="1"/>
</dbReference>
<dbReference type="SUPFAM" id="SSF57716">
    <property type="entry name" value="Glucocorticoid receptor-like (DNA-binding domain)"/>
    <property type="match status" value="1"/>
</dbReference>
<dbReference type="PROSITE" id="PS00527">
    <property type="entry name" value="RIBOSOMAL_S14"/>
    <property type="match status" value="1"/>
</dbReference>
<accession>Q5HSA3</accession>
<sequence length="61" mass="6956">MAKKSMIAKAARKPKFKVRAYTRCQICGRPHSVYRDFGICRVCLRKMGNEGLIPGLKKASW</sequence>
<organism>
    <name type="scientific">Campylobacter jejuni (strain RM1221)</name>
    <dbReference type="NCBI Taxonomy" id="195099"/>
    <lineage>
        <taxon>Bacteria</taxon>
        <taxon>Pseudomonadati</taxon>
        <taxon>Campylobacterota</taxon>
        <taxon>Epsilonproteobacteria</taxon>
        <taxon>Campylobacterales</taxon>
        <taxon>Campylobacteraceae</taxon>
        <taxon>Campylobacter</taxon>
    </lineage>
</organism>
<reference key="1">
    <citation type="journal article" date="2005" name="PLoS Biol.">
        <title>Major structural differences and novel potential virulence mechanisms from the genomes of multiple Campylobacter species.</title>
        <authorList>
            <person name="Fouts D.E."/>
            <person name="Mongodin E.F."/>
            <person name="Mandrell R.E."/>
            <person name="Miller W.G."/>
            <person name="Rasko D.A."/>
            <person name="Ravel J."/>
            <person name="Brinkac L.M."/>
            <person name="DeBoy R.T."/>
            <person name="Parker C.T."/>
            <person name="Daugherty S.C."/>
            <person name="Dodson R.J."/>
            <person name="Durkin A.S."/>
            <person name="Madupu R."/>
            <person name="Sullivan S.A."/>
            <person name="Shetty J.U."/>
            <person name="Ayodeji M.A."/>
            <person name="Shvartsbeyn A."/>
            <person name="Schatz M.C."/>
            <person name="Badger J.H."/>
            <person name="Fraser C.M."/>
            <person name="Nelson K.E."/>
        </authorList>
    </citation>
    <scope>NUCLEOTIDE SEQUENCE [LARGE SCALE GENOMIC DNA]</scope>
    <source>
        <strain>RM1221</strain>
    </source>
</reference>
<proteinExistence type="inferred from homology"/>
<keyword id="KW-0479">Metal-binding</keyword>
<keyword id="KW-0687">Ribonucleoprotein</keyword>
<keyword id="KW-0689">Ribosomal protein</keyword>
<keyword id="KW-0694">RNA-binding</keyword>
<keyword id="KW-0699">rRNA-binding</keyword>
<keyword id="KW-0862">Zinc</keyword>
<feature type="chain" id="PRO_0000269088" description="Small ribosomal subunit protein uS14">
    <location>
        <begin position="1"/>
        <end position="61"/>
    </location>
</feature>
<feature type="binding site" evidence="1">
    <location>
        <position position="24"/>
    </location>
    <ligand>
        <name>Zn(2+)</name>
        <dbReference type="ChEBI" id="CHEBI:29105"/>
    </ligand>
</feature>
<feature type="binding site" evidence="1">
    <location>
        <position position="27"/>
    </location>
    <ligand>
        <name>Zn(2+)</name>
        <dbReference type="ChEBI" id="CHEBI:29105"/>
    </ligand>
</feature>
<feature type="binding site" evidence="1">
    <location>
        <position position="40"/>
    </location>
    <ligand>
        <name>Zn(2+)</name>
        <dbReference type="ChEBI" id="CHEBI:29105"/>
    </ligand>
</feature>
<feature type="binding site" evidence="1">
    <location>
        <position position="43"/>
    </location>
    <ligand>
        <name>Zn(2+)</name>
        <dbReference type="ChEBI" id="CHEBI:29105"/>
    </ligand>
</feature>
<comment type="function">
    <text evidence="1">Binds 16S rRNA, required for the assembly of 30S particles and may also be responsible for determining the conformation of the 16S rRNA at the A site.</text>
</comment>
<comment type="cofactor">
    <cofactor evidence="1">
        <name>Zn(2+)</name>
        <dbReference type="ChEBI" id="CHEBI:29105"/>
    </cofactor>
    <text evidence="1">Binds 1 zinc ion per subunit.</text>
</comment>
<comment type="subunit">
    <text evidence="1">Part of the 30S ribosomal subunit. Contacts proteins S3 and S10.</text>
</comment>
<comment type="similarity">
    <text evidence="1">Belongs to the universal ribosomal protein uS14 family. Zinc-binding uS14 subfamily.</text>
</comment>
<gene>
    <name evidence="1" type="primary">rpsZ</name>
    <name evidence="1" type="synonym">rpsN</name>
    <name type="ordered locus">CJE1862</name>
</gene>
<evidence type="ECO:0000255" key="1">
    <source>
        <dbReference type="HAMAP-Rule" id="MF_01364"/>
    </source>
</evidence>
<evidence type="ECO:0000305" key="2"/>